<comment type="function">
    <text evidence="1">Required for the insertion and/or proper folding and/or complex formation of integral membrane proteins into the membrane. Involved in integration of membrane proteins that insert both dependently and independently of the Sec translocase complex, as well as at least some lipoproteins. Aids folding of multispanning membrane proteins.</text>
</comment>
<comment type="subunit">
    <text evidence="1">Interacts with the Sec translocase complex via SecD. Specifically interacts with transmembrane segments of nascent integral membrane proteins during membrane integration.</text>
</comment>
<comment type="subcellular location">
    <subcellularLocation>
        <location evidence="1">Cell inner membrane</location>
        <topology evidence="1">Multi-pass membrane protein</topology>
    </subcellularLocation>
</comment>
<comment type="similarity">
    <text evidence="1">Belongs to the OXA1/ALB3/YidC family. Type 1 subfamily.</text>
</comment>
<feature type="chain" id="PRO_0000124701" description="Membrane protein insertase YidC">
    <location>
        <begin position="1"/>
        <end position="558"/>
    </location>
</feature>
<feature type="transmembrane region" description="Helical" evidence="1">
    <location>
        <begin position="6"/>
        <end position="26"/>
    </location>
</feature>
<feature type="transmembrane region" description="Helical" evidence="1">
    <location>
        <begin position="359"/>
        <end position="379"/>
    </location>
</feature>
<feature type="transmembrane region" description="Helical" evidence="1">
    <location>
        <begin position="434"/>
        <end position="454"/>
    </location>
</feature>
<feature type="transmembrane region" description="Helical" evidence="1">
    <location>
        <begin position="480"/>
        <end position="500"/>
    </location>
</feature>
<feature type="transmembrane region" description="Helical" evidence="1">
    <location>
        <begin position="513"/>
        <end position="533"/>
    </location>
</feature>
<name>YIDC_BLOFL</name>
<accession>Q7U351</accession>
<proteinExistence type="inferred from homology"/>
<dbReference type="EMBL" id="BX248583">
    <property type="protein sequence ID" value="CAD83540.1"/>
    <property type="molecule type" value="Genomic_DNA"/>
</dbReference>
<dbReference type="SMR" id="Q7U351"/>
<dbReference type="STRING" id="203907.Bfl012"/>
<dbReference type="KEGG" id="bfl:Bfl012"/>
<dbReference type="eggNOG" id="COG0706">
    <property type="taxonomic scope" value="Bacteria"/>
</dbReference>
<dbReference type="HOGENOM" id="CLU_016535_3_0_6"/>
<dbReference type="OrthoDB" id="9780552at2"/>
<dbReference type="Proteomes" id="UP000002192">
    <property type="component" value="Chromosome"/>
</dbReference>
<dbReference type="GO" id="GO:0005886">
    <property type="term" value="C:plasma membrane"/>
    <property type="evidence" value="ECO:0007669"/>
    <property type="project" value="UniProtKB-SubCell"/>
</dbReference>
<dbReference type="GO" id="GO:0032977">
    <property type="term" value="F:membrane insertase activity"/>
    <property type="evidence" value="ECO:0007669"/>
    <property type="project" value="InterPro"/>
</dbReference>
<dbReference type="GO" id="GO:0051205">
    <property type="term" value="P:protein insertion into membrane"/>
    <property type="evidence" value="ECO:0007669"/>
    <property type="project" value="TreeGrafter"/>
</dbReference>
<dbReference type="GO" id="GO:0015031">
    <property type="term" value="P:protein transport"/>
    <property type="evidence" value="ECO:0007669"/>
    <property type="project" value="UniProtKB-KW"/>
</dbReference>
<dbReference type="CDD" id="cd20070">
    <property type="entry name" value="5TM_YidC_Alb3"/>
    <property type="match status" value="1"/>
</dbReference>
<dbReference type="CDD" id="cd19961">
    <property type="entry name" value="EcYidC-like_peri"/>
    <property type="match status" value="1"/>
</dbReference>
<dbReference type="Gene3D" id="2.70.98.90">
    <property type="match status" value="1"/>
</dbReference>
<dbReference type="HAMAP" id="MF_01810">
    <property type="entry name" value="YidC_type1"/>
    <property type="match status" value="1"/>
</dbReference>
<dbReference type="InterPro" id="IPR019998">
    <property type="entry name" value="Membr_insert_YidC"/>
</dbReference>
<dbReference type="InterPro" id="IPR028053">
    <property type="entry name" value="Membr_insert_YidC_N"/>
</dbReference>
<dbReference type="InterPro" id="IPR001708">
    <property type="entry name" value="YidC/ALB3/OXA1/COX18"/>
</dbReference>
<dbReference type="InterPro" id="IPR028055">
    <property type="entry name" value="YidC/Oxa/ALB_C"/>
</dbReference>
<dbReference type="InterPro" id="IPR047196">
    <property type="entry name" value="YidC_ALB_C"/>
</dbReference>
<dbReference type="InterPro" id="IPR038221">
    <property type="entry name" value="YidC_periplasmic_sf"/>
</dbReference>
<dbReference type="NCBIfam" id="NF002352">
    <property type="entry name" value="PRK01318.1-3"/>
    <property type="match status" value="1"/>
</dbReference>
<dbReference type="NCBIfam" id="TIGR03593">
    <property type="entry name" value="yidC_nterm"/>
    <property type="match status" value="1"/>
</dbReference>
<dbReference type="NCBIfam" id="TIGR03592">
    <property type="entry name" value="yidC_oxa1_cterm"/>
    <property type="match status" value="1"/>
</dbReference>
<dbReference type="PANTHER" id="PTHR12428:SF65">
    <property type="entry name" value="CYTOCHROME C OXIDASE ASSEMBLY PROTEIN COX18, MITOCHONDRIAL"/>
    <property type="match status" value="1"/>
</dbReference>
<dbReference type="PANTHER" id="PTHR12428">
    <property type="entry name" value="OXA1"/>
    <property type="match status" value="1"/>
</dbReference>
<dbReference type="Pfam" id="PF02096">
    <property type="entry name" value="60KD_IMP"/>
    <property type="match status" value="1"/>
</dbReference>
<dbReference type="Pfam" id="PF14849">
    <property type="entry name" value="YidC_periplas"/>
    <property type="match status" value="1"/>
</dbReference>
<dbReference type="PRINTS" id="PR00701">
    <property type="entry name" value="60KDINNERMP"/>
</dbReference>
<dbReference type="PRINTS" id="PR01900">
    <property type="entry name" value="YIDCPROTEIN"/>
</dbReference>
<protein>
    <recommendedName>
        <fullName evidence="1">Membrane protein insertase YidC</fullName>
    </recommendedName>
    <alternativeName>
        <fullName evidence="1">Foldase YidC</fullName>
    </alternativeName>
    <alternativeName>
        <fullName evidence="1">Membrane integrase YidC</fullName>
    </alternativeName>
    <alternativeName>
        <fullName evidence="1">Membrane protein YidC</fullName>
    </alternativeName>
</protein>
<organism>
    <name type="scientific">Blochmanniella floridana</name>
    <dbReference type="NCBI Taxonomy" id="203907"/>
    <lineage>
        <taxon>Bacteria</taxon>
        <taxon>Pseudomonadati</taxon>
        <taxon>Pseudomonadota</taxon>
        <taxon>Gammaproteobacteria</taxon>
        <taxon>Enterobacterales</taxon>
        <taxon>Enterobacteriaceae</taxon>
        <taxon>ant endosymbionts</taxon>
        <taxon>Candidatus Blochmanniella</taxon>
    </lineage>
</organism>
<keyword id="KW-0997">Cell inner membrane</keyword>
<keyword id="KW-1003">Cell membrane</keyword>
<keyword id="KW-0143">Chaperone</keyword>
<keyword id="KW-0472">Membrane</keyword>
<keyword id="KW-0653">Protein transport</keyword>
<keyword id="KW-1185">Reference proteome</keyword>
<keyword id="KW-0812">Transmembrane</keyword>
<keyword id="KW-1133">Transmembrane helix</keyword>
<keyword id="KW-0813">Transport</keyword>
<reference key="1">
    <citation type="journal article" date="2003" name="Proc. Natl. Acad. Sci. U.S.A.">
        <title>The genome sequence of Blochmannia floridanus: comparative analysis of reduced genomes.</title>
        <authorList>
            <person name="Gil R."/>
            <person name="Silva F.J."/>
            <person name="Zientz E."/>
            <person name="Delmotte F."/>
            <person name="Gonzalez-Candelas F."/>
            <person name="Latorre A."/>
            <person name="Rausell C."/>
            <person name="Kamerbeek J."/>
            <person name="Gadau J."/>
            <person name="Hoelldobler B."/>
            <person name="van Ham R.C.H.J."/>
            <person name="Gross R."/>
            <person name="Moya A."/>
        </authorList>
    </citation>
    <scope>NUCLEOTIDE SEQUENCE [LARGE SCALE GENOMIC DNA]</scope>
</reference>
<gene>
    <name evidence="1" type="primary">yidC</name>
    <name type="ordered locus">Bfl012</name>
</gene>
<sequence length="558" mass="66179">MESQRSFFIIVFLIVSFILWKIWDDEHHINLLNIENNHSTLQPYSIQSHESNQNTPITHTNNPYSHIITIKTDVFLLKINTYSGNIEEAYLNNYQENLNSQKPLKLLHTSKENKYQAYIDIETLNEYFTNDLNQKNKKHYLYYSNTTNQCEYILKNNENKLQFDLTYQGPNNIIYTKRYLLNRNDYSIYITYIIDNQSTYPIHIKLYGNLIQSIHSDVIQSKHNDHCPLYTYQEAAYSTDTEKYQKYNLKDIKHTNLNIHSTNGWIALLQKYFIIALLPITPKDNTFYTTYLNNHDISIGFKSDFIHIPPGKKNELQSILWMGPKIQDNMKLVAPNLDLVIDYGWLWFISHPLFKLLQFIHTYTIDNWGISIILITVIIRLIMYPLTKAQYTSMAKIRMLQPKLISIQEEYKHDKYQYHQKTIELYKKEKVNPLGGCLPLLIQMPIFLALYYMLSESVELRHAKFAFWIKDLSDQDPYYILPIIMGITMFFIQKLSPTTITDPIQKKIMNIMLVIFTIFFLWFPSGLVLYYIISNIITIIQQQVIYHDLSKKGLHNKK</sequence>
<evidence type="ECO:0000255" key="1">
    <source>
        <dbReference type="HAMAP-Rule" id="MF_01810"/>
    </source>
</evidence>